<comment type="function">
    <text evidence="4">Has antibacterial activity.</text>
</comment>
<comment type="subcellular location">
    <subcellularLocation>
        <location evidence="4">Secreted</location>
    </subcellularLocation>
</comment>
<comment type="similarity">
    <text evidence="4">Belongs to the beta-defensin family.</text>
</comment>
<feature type="signal peptide" evidence="2">
    <location>
        <begin position="1"/>
        <end position="20"/>
    </location>
</feature>
<feature type="chain" id="PRO_0000289840" description="Beta-defensin 125">
    <location>
        <begin position="21"/>
        <end position="157"/>
    </location>
</feature>
<feature type="region of interest" description="Disordered" evidence="3">
    <location>
        <begin position="109"/>
        <end position="157"/>
    </location>
</feature>
<feature type="compositionally biased region" description="Low complexity" evidence="3">
    <location>
        <begin position="110"/>
        <end position="145"/>
    </location>
</feature>
<feature type="disulfide bond" evidence="1">
    <location>
        <begin position="27"/>
        <end position="55"/>
    </location>
</feature>
<feature type="disulfide bond" evidence="1">
    <location>
        <begin position="35"/>
        <end position="49"/>
    </location>
</feature>
<feature type="disulfide bond" evidence="1">
    <location>
        <begin position="39"/>
        <end position="56"/>
    </location>
</feature>
<keyword id="KW-0044">Antibiotic</keyword>
<keyword id="KW-0929">Antimicrobial</keyword>
<keyword id="KW-0211">Defensin</keyword>
<keyword id="KW-1015">Disulfide bond</keyword>
<keyword id="KW-1185">Reference proteome</keyword>
<keyword id="KW-0964">Secreted</keyword>
<keyword id="KW-0732">Signal</keyword>
<protein>
    <recommendedName>
        <fullName>Beta-defensin 125</fullName>
    </recommendedName>
    <alternativeName>
        <fullName>Defensin, beta 125</fullName>
    </alternativeName>
</protein>
<proteinExistence type="inferred from homology"/>
<reference key="1">
    <citation type="submission" date="2006-11" db="EMBL/GenBank/DDBJ databases">
        <title>Evolution and sequence variation of human beta-defensin genes.</title>
        <authorList>
            <person name="Hollox E.J."/>
            <person name="Armour J.A.L."/>
        </authorList>
    </citation>
    <scope>NUCLEOTIDE SEQUENCE [GENOMIC DNA]</scope>
</reference>
<dbReference type="EMBL" id="AM410143">
    <property type="protein sequence ID" value="CAL68982.1"/>
    <property type="molecule type" value="Genomic_DNA"/>
</dbReference>
<dbReference type="RefSeq" id="XP_004061672.1">
    <property type="nucleotide sequence ID" value="XM_004061624.2"/>
</dbReference>
<dbReference type="STRING" id="9593.ENSGGOP00000026067"/>
<dbReference type="Ensembl" id="ENSGGOT00000032192.2">
    <property type="protein sequence ID" value="ENSGGOP00000026067.1"/>
    <property type="gene ID" value="ENSGGOG00000026876.2"/>
</dbReference>
<dbReference type="eggNOG" id="ENOG502RU2M">
    <property type="taxonomic scope" value="Eukaryota"/>
</dbReference>
<dbReference type="GeneTree" id="ENSGT00390000000604"/>
<dbReference type="HOGENOM" id="CLU_152039_0_0_1"/>
<dbReference type="InParanoid" id="A4H238"/>
<dbReference type="OMA" id="CFHVERY"/>
<dbReference type="Proteomes" id="UP000001519">
    <property type="component" value="Chromosome 20"/>
</dbReference>
<dbReference type="Bgee" id="ENSGGOG00000026876">
    <property type="expression patterns" value="Expressed in adult mammalian kidney"/>
</dbReference>
<dbReference type="GO" id="GO:0005576">
    <property type="term" value="C:extracellular region"/>
    <property type="evidence" value="ECO:0007669"/>
    <property type="project" value="UniProtKB-SubCell"/>
</dbReference>
<dbReference type="GO" id="GO:0050829">
    <property type="term" value="P:defense response to Gram-negative bacterium"/>
    <property type="evidence" value="ECO:0007669"/>
    <property type="project" value="UniProtKB-ARBA"/>
</dbReference>
<dbReference type="GO" id="GO:0045087">
    <property type="term" value="P:innate immune response"/>
    <property type="evidence" value="ECO:0007669"/>
    <property type="project" value="InterPro"/>
</dbReference>
<dbReference type="InterPro" id="IPR050544">
    <property type="entry name" value="Beta-defensin"/>
</dbReference>
<dbReference type="InterPro" id="IPR025933">
    <property type="entry name" value="Beta_defensin_dom"/>
</dbReference>
<dbReference type="PANTHER" id="PTHR15001">
    <property type="entry name" value="BETA-DEFENSIN 123-RELATED"/>
    <property type="match status" value="1"/>
</dbReference>
<dbReference type="PANTHER" id="PTHR15001:SF12">
    <property type="entry name" value="BETA-DEFENSIN 125"/>
    <property type="match status" value="1"/>
</dbReference>
<dbReference type="Pfam" id="PF13841">
    <property type="entry name" value="Defensin_beta_2"/>
    <property type="match status" value="1"/>
</dbReference>
<accession>A4H238</accession>
<organism>
    <name type="scientific">Gorilla gorilla gorilla</name>
    <name type="common">Western lowland gorilla</name>
    <dbReference type="NCBI Taxonomy" id="9595"/>
    <lineage>
        <taxon>Eukaryota</taxon>
        <taxon>Metazoa</taxon>
        <taxon>Chordata</taxon>
        <taxon>Craniata</taxon>
        <taxon>Vertebrata</taxon>
        <taxon>Euteleostomi</taxon>
        <taxon>Mammalia</taxon>
        <taxon>Eutheria</taxon>
        <taxon>Euarchontoglires</taxon>
        <taxon>Primates</taxon>
        <taxon>Haplorrhini</taxon>
        <taxon>Catarrhini</taxon>
        <taxon>Hominidae</taxon>
        <taxon>Gorilla</taxon>
    </lineage>
</organism>
<name>DB125_GORGO</name>
<evidence type="ECO:0000250" key="1"/>
<evidence type="ECO:0000255" key="2"/>
<evidence type="ECO:0000256" key="3">
    <source>
        <dbReference type="SAM" id="MobiDB-lite"/>
    </source>
</evidence>
<evidence type="ECO:0000305" key="4"/>
<gene>
    <name type="primary">DEFB125</name>
</gene>
<sequence length="157" mass="17688">MNILMLTFIICGLLTQVTKGSFEPQKCWKNNIGHCRRRCLDTERCILLCRNKLSCCIYIIISHEYTQRPAFPMIHLEDITFDYSDVDSFTGSPVSMLNDLITFDTTKFGETMTPETNTPETTVPPSETTTPETTMPPSETATSETMPPPSQTALTHN</sequence>